<proteinExistence type="evidence at protein level"/>
<organism>
    <name type="scientific">Helicobacter pylori (strain ATCC 700392 / 26695)</name>
    <name type="common">Campylobacter pylori</name>
    <dbReference type="NCBI Taxonomy" id="85962"/>
    <lineage>
        <taxon>Bacteria</taxon>
        <taxon>Pseudomonadati</taxon>
        <taxon>Campylobacterota</taxon>
        <taxon>Epsilonproteobacteria</taxon>
        <taxon>Campylobacterales</taxon>
        <taxon>Helicobacteraceae</taxon>
        <taxon>Helicobacter</taxon>
    </lineage>
</organism>
<sequence length="68" mass="7512">MPFINIKLVPENGGPTNEQKQQLIEGVSDLMVKVLNKNKASIVVIIDEVDSNNYGLGGESVHHLRQKN</sequence>
<dbReference type="EC" id="5.3.2.-"/>
<dbReference type="EMBL" id="AE000511">
    <property type="protein sequence ID" value="AAD07977.1"/>
    <property type="molecule type" value="Genomic_DNA"/>
</dbReference>
<dbReference type="PIR" id="D64635">
    <property type="entry name" value="D64635"/>
</dbReference>
<dbReference type="RefSeq" id="NP_207716.1">
    <property type="nucleotide sequence ID" value="NC_000915.1"/>
</dbReference>
<dbReference type="RefSeq" id="WP_001115881.1">
    <property type="nucleotide sequence ID" value="NC_018939.1"/>
</dbReference>
<dbReference type="PDB" id="2ORM">
    <property type="method" value="X-ray"/>
    <property type="resolution" value="2.10 A"/>
    <property type="chains" value="A/B/C/D/E/F=2-68"/>
</dbReference>
<dbReference type="PDB" id="3M21">
    <property type="method" value="X-ray"/>
    <property type="resolution" value="1.90 A"/>
    <property type="chains" value="A/B/C/D/E/F=2-68"/>
</dbReference>
<dbReference type="PDBsum" id="2ORM"/>
<dbReference type="PDBsum" id="3M21"/>
<dbReference type="SMR" id="O25581"/>
<dbReference type="DIP" id="DIP-3525N"/>
<dbReference type="IntAct" id="O25581">
    <property type="interactions" value="6"/>
</dbReference>
<dbReference type="MINT" id="O25581"/>
<dbReference type="STRING" id="85962.HP_0924"/>
<dbReference type="PaxDb" id="85962-C694_04755"/>
<dbReference type="EnsemblBacteria" id="AAD07977">
    <property type="protein sequence ID" value="AAD07977"/>
    <property type="gene ID" value="HP_0924"/>
</dbReference>
<dbReference type="KEGG" id="heo:C694_04755"/>
<dbReference type="KEGG" id="hpy:HP_0924"/>
<dbReference type="PATRIC" id="fig|85962.47.peg.989"/>
<dbReference type="eggNOG" id="COG1942">
    <property type="taxonomic scope" value="Bacteria"/>
</dbReference>
<dbReference type="InParanoid" id="O25581"/>
<dbReference type="OrthoDB" id="9799841at2"/>
<dbReference type="PhylomeDB" id="O25581"/>
<dbReference type="EvolutionaryTrace" id="O25581"/>
<dbReference type="Proteomes" id="UP000000429">
    <property type="component" value="Chromosome"/>
</dbReference>
<dbReference type="GO" id="GO:0016853">
    <property type="term" value="F:isomerase activity"/>
    <property type="evidence" value="ECO:0000318"/>
    <property type="project" value="GO_Central"/>
</dbReference>
<dbReference type="CDD" id="cd00491">
    <property type="entry name" value="4Oxalocrotonate_Tautomerase"/>
    <property type="match status" value="1"/>
</dbReference>
<dbReference type="Gene3D" id="3.30.429.10">
    <property type="entry name" value="Macrophage Migration Inhibitory Factor"/>
    <property type="match status" value="1"/>
</dbReference>
<dbReference type="InterPro" id="IPR018191">
    <property type="entry name" value="4-OT"/>
</dbReference>
<dbReference type="InterPro" id="IPR004370">
    <property type="entry name" value="4-OT-like_dom"/>
</dbReference>
<dbReference type="InterPro" id="IPR014347">
    <property type="entry name" value="Tautomerase/MIF_sf"/>
</dbReference>
<dbReference type="NCBIfam" id="TIGR00013">
    <property type="entry name" value="taut"/>
    <property type="match status" value="1"/>
</dbReference>
<dbReference type="PANTHER" id="PTHR35530:SF1">
    <property type="entry name" value="2-HYDROXYMUCONATE TAUTOMERASE"/>
    <property type="match status" value="1"/>
</dbReference>
<dbReference type="PANTHER" id="PTHR35530">
    <property type="entry name" value="TAUTOMERASE-RELATED"/>
    <property type="match status" value="1"/>
</dbReference>
<dbReference type="Pfam" id="PF01361">
    <property type="entry name" value="Tautomerase"/>
    <property type="match status" value="1"/>
</dbReference>
<dbReference type="SUPFAM" id="SSF55331">
    <property type="entry name" value="Tautomerase/MIF"/>
    <property type="match status" value="1"/>
</dbReference>
<protein>
    <recommendedName>
        <fullName>Probable tautomerase HP_0924</fullName>
        <ecNumber>5.3.2.-</ecNumber>
    </recommendedName>
</protein>
<gene>
    <name type="ordered locus">HP_0924</name>
</gene>
<keyword id="KW-0002">3D-structure</keyword>
<keyword id="KW-0413">Isomerase</keyword>
<keyword id="KW-1185">Reference proteome</keyword>
<accession>O25581</accession>
<name>Y924_HELPY</name>
<evidence type="ECO:0000250" key="1"/>
<evidence type="ECO:0000305" key="2"/>
<evidence type="ECO:0007829" key="3">
    <source>
        <dbReference type="PDB" id="3M21"/>
    </source>
</evidence>
<feature type="initiator methionine" description="Removed" evidence="1">
    <location>
        <position position="1"/>
    </location>
</feature>
<feature type="chain" id="PRO_0000209531" description="Probable tautomerase HP_0924">
    <location>
        <begin position="2"/>
        <end position="68"/>
    </location>
</feature>
<feature type="active site" description="Proton acceptor; via imino nitrogen" evidence="1">
    <location>
        <position position="2"/>
    </location>
</feature>
<feature type="strand" evidence="3">
    <location>
        <begin position="3"/>
        <end position="8"/>
    </location>
</feature>
<feature type="helix" evidence="3">
    <location>
        <begin position="17"/>
        <end position="35"/>
    </location>
</feature>
<feature type="helix" evidence="3">
    <location>
        <begin position="39"/>
        <end position="41"/>
    </location>
</feature>
<feature type="strand" evidence="3">
    <location>
        <begin position="43"/>
        <end position="48"/>
    </location>
</feature>
<feature type="turn" evidence="3">
    <location>
        <begin position="51"/>
        <end position="53"/>
    </location>
</feature>
<feature type="strand" evidence="3">
    <location>
        <begin position="54"/>
        <end position="56"/>
    </location>
</feature>
<feature type="helix" evidence="3">
    <location>
        <begin position="61"/>
        <end position="65"/>
    </location>
</feature>
<comment type="similarity">
    <text evidence="2">Belongs to the 4-oxalocrotonate tautomerase family.</text>
</comment>
<reference key="1">
    <citation type="journal article" date="1997" name="Nature">
        <title>The complete genome sequence of the gastric pathogen Helicobacter pylori.</title>
        <authorList>
            <person name="Tomb J.-F."/>
            <person name="White O."/>
            <person name="Kerlavage A.R."/>
            <person name="Clayton R.A."/>
            <person name="Sutton G.G."/>
            <person name="Fleischmann R.D."/>
            <person name="Ketchum K.A."/>
            <person name="Klenk H.-P."/>
            <person name="Gill S.R."/>
            <person name="Dougherty B.A."/>
            <person name="Nelson K.E."/>
            <person name="Quackenbush J."/>
            <person name="Zhou L."/>
            <person name="Kirkness E.F."/>
            <person name="Peterson S.N."/>
            <person name="Loftus B.J."/>
            <person name="Richardson D.L."/>
            <person name="Dodson R.J."/>
            <person name="Khalak H.G."/>
            <person name="Glodek A."/>
            <person name="McKenney K."/>
            <person name="FitzGerald L.M."/>
            <person name="Lee N."/>
            <person name="Adams M.D."/>
            <person name="Hickey E.K."/>
            <person name="Berg D.E."/>
            <person name="Gocayne J.D."/>
            <person name="Utterback T.R."/>
            <person name="Peterson J.D."/>
            <person name="Kelley J.M."/>
            <person name="Cotton M.D."/>
            <person name="Weidman J.F."/>
            <person name="Fujii C."/>
            <person name="Bowman C."/>
            <person name="Watthey L."/>
            <person name="Wallin E."/>
            <person name="Hayes W.S."/>
            <person name="Borodovsky M."/>
            <person name="Karp P.D."/>
            <person name="Smith H.O."/>
            <person name="Fraser C.M."/>
            <person name="Venter J.C."/>
        </authorList>
    </citation>
    <scope>NUCLEOTIDE SEQUENCE [LARGE SCALE GENOMIC DNA]</scope>
    <source>
        <strain>ATCC 700392 / 26695</strain>
    </source>
</reference>